<feature type="chain" id="PRO_1000063245" description="Putative transport protein AHA_3492">
    <location>
        <begin position="1"/>
        <end position="553"/>
    </location>
</feature>
<feature type="transmembrane region" description="Helical" evidence="1">
    <location>
        <begin position="4"/>
        <end position="24"/>
    </location>
</feature>
<feature type="transmembrane region" description="Helical" evidence="1">
    <location>
        <begin position="29"/>
        <end position="49"/>
    </location>
</feature>
<feature type="transmembrane region" description="Helical" evidence="1">
    <location>
        <begin position="65"/>
        <end position="85"/>
    </location>
</feature>
<feature type="transmembrane region" description="Helical" evidence="1">
    <location>
        <begin position="95"/>
        <end position="115"/>
    </location>
</feature>
<feature type="transmembrane region" description="Helical" evidence="1">
    <location>
        <begin position="158"/>
        <end position="178"/>
    </location>
</feature>
<feature type="transmembrane region" description="Helical" evidence="1">
    <location>
        <begin position="371"/>
        <end position="391"/>
    </location>
</feature>
<feature type="transmembrane region" description="Helical" evidence="1">
    <location>
        <begin position="403"/>
        <end position="425"/>
    </location>
</feature>
<feature type="transmembrane region" description="Helical" evidence="1">
    <location>
        <begin position="439"/>
        <end position="459"/>
    </location>
</feature>
<feature type="transmembrane region" description="Helical" evidence="1">
    <location>
        <begin position="465"/>
        <end position="485"/>
    </location>
</feature>
<feature type="transmembrane region" description="Helical" evidence="1">
    <location>
        <begin position="493"/>
        <end position="513"/>
    </location>
</feature>
<feature type="transmembrane region" description="Helical" evidence="1">
    <location>
        <begin position="533"/>
        <end position="553"/>
    </location>
</feature>
<feature type="domain" description="RCK C-terminal 1" evidence="1">
    <location>
        <begin position="191"/>
        <end position="276"/>
    </location>
</feature>
<feature type="domain" description="RCK C-terminal 2" evidence="1">
    <location>
        <begin position="279"/>
        <end position="361"/>
    </location>
</feature>
<name>Y3492_AERHH</name>
<protein>
    <recommendedName>
        <fullName evidence="1">Putative transport protein AHA_3492</fullName>
    </recommendedName>
</protein>
<keyword id="KW-1003">Cell membrane</keyword>
<keyword id="KW-0472">Membrane</keyword>
<keyword id="KW-1185">Reference proteome</keyword>
<keyword id="KW-0677">Repeat</keyword>
<keyword id="KW-0812">Transmembrane</keyword>
<keyword id="KW-1133">Transmembrane helix</keyword>
<keyword id="KW-0813">Transport</keyword>
<gene>
    <name type="ordered locus">AHA_3492</name>
</gene>
<accession>A0KNW5</accession>
<dbReference type="EMBL" id="CP000462">
    <property type="protein sequence ID" value="ABK38871.1"/>
    <property type="molecule type" value="Genomic_DNA"/>
</dbReference>
<dbReference type="RefSeq" id="WP_011707241.1">
    <property type="nucleotide sequence ID" value="NC_008570.1"/>
</dbReference>
<dbReference type="RefSeq" id="YP_857966.1">
    <property type="nucleotide sequence ID" value="NC_008570.1"/>
</dbReference>
<dbReference type="SMR" id="A0KNW5"/>
<dbReference type="STRING" id="380703.AHA_3492"/>
<dbReference type="EnsemblBacteria" id="ABK38871">
    <property type="protein sequence ID" value="ABK38871"/>
    <property type="gene ID" value="AHA_3492"/>
</dbReference>
<dbReference type="GeneID" id="4490422"/>
<dbReference type="KEGG" id="aha:AHA_3492"/>
<dbReference type="PATRIC" id="fig|380703.7.peg.3480"/>
<dbReference type="eggNOG" id="COG0569">
    <property type="taxonomic scope" value="Bacteria"/>
</dbReference>
<dbReference type="eggNOG" id="COG2985">
    <property type="taxonomic scope" value="Bacteria"/>
</dbReference>
<dbReference type="HOGENOM" id="CLU_035023_3_1_6"/>
<dbReference type="OrthoDB" id="5166626at2"/>
<dbReference type="Proteomes" id="UP000000756">
    <property type="component" value="Chromosome"/>
</dbReference>
<dbReference type="GO" id="GO:0005886">
    <property type="term" value="C:plasma membrane"/>
    <property type="evidence" value="ECO:0007669"/>
    <property type="project" value="UniProtKB-SubCell"/>
</dbReference>
<dbReference type="GO" id="GO:0008324">
    <property type="term" value="F:monoatomic cation transmembrane transporter activity"/>
    <property type="evidence" value="ECO:0007669"/>
    <property type="project" value="InterPro"/>
</dbReference>
<dbReference type="GO" id="GO:0006813">
    <property type="term" value="P:potassium ion transport"/>
    <property type="evidence" value="ECO:0007669"/>
    <property type="project" value="InterPro"/>
</dbReference>
<dbReference type="Gene3D" id="3.30.70.1450">
    <property type="entry name" value="Regulator of K+ conductance, C-terminal domain"/>
    <property type="match status" value="2"/>
</dbReference>
<dbReference type="HAMAP" id="MF_01016">
    <property type="entry name" value="YidE"/>
    <property type="match status" value="1"/>
</dbReference>
<dbReference type="InterPro" id="IPR050144">
    <property type="entry name" value="AAE_transporter"/>
</dbReference>
<dbReference type="InterPro" id="IPR006037">
    <property type="entry name" value="RCK_C"/>
</dbReference>
<dbReference type="InterPro" id="IPR036721">
    <property type="entry name" value="RCK_C_sf"/>
</dbReference>
<dbReference type="InterPro" id="IPR023018">
    <property type="entry name" value="Transpt_YidE_put"/>
</dbReference>
<dbReference type="InterPro" id="IPR006512">
    <property type="entry name" value="YidE_YbjL"/>
</dbReference>
<dbReference type="NCBIfam" id="NF003007">
    <property type="entry name" value="PRK03818.1"/>
    <property type="match status" value="1"/>
</dbReference>
<dbReference type="NCBIfam" id="TIGR01625">
    <property type="entry name" value="YidE_YbjL_dupl"/>
    <property type="match status" value="2"/>
</dbReference>
<dbReference type="PANTHER" id="PTHR30445">
    <property type="entry name" value="K(+)_H(+) ANTIPORTER SUBUNIT KHTT"/>
    <property type="match status" value="1"/>
</dbReference>
<dbReference type="PANTHER" id="PTHR30445:SF3">
    <property type="entry name" value="TRANSPORT PROTEIN YIDE-RELATED"/>
    <property type="match status" value="1"/>
</dbReference>
<dbReference type="Pfam" id="PF06826">
    <property type="entry name" value="Asp-Al_Ex"/>
    <property type="match status" value="2"/>
</dbReference>
<dbReference type="Pfam" id="PF02080">
    <property type="entry name" value="TrkA_C"/>
    <property type="match status" value="2"/>
</dbReference>
<dbReference type="SUPFAM" id="SSF116726">
    <property type="entry name" value="TrkA C-terminal domain-like"/>
    <property type="match status" value="2"/>
</dbReference>
<dbReference type="PROSITE" id="PS51202">
    <property type="entry name" value="RCK_C"/>
    <property type="match status" value="2"/>
</dbReference>
<sequence length="553" mass="58849">MSDIALSISMLSLVAVLGLWLGNWRVYGVGLGIGGVLFGGIIVGHFAGLSGLALDEQTLHFIQEFGLILFVYTIGIQVGPGFFSSLRSSGLKLNGFAALLVLLGCAVAAALHQLFDVPLPVILGVFSGAVTNTPSLGAGQQILAELGAAPGSTGLMGMGYAVAYPFGICGILLTMWLIRMFFRIKIDEEAAQFEQQAGKTKESLQTINIAVRNPNIHGLMLSEIPSLDEADVICSRLKRGDELMVPRPDSRIELGDLLHLVGERHALRKVLLVLGEEVETSLSTRGTDLRVERVVVTNEQVLGKKIRDLDIKQKYDVVISRLNRAGIELVPTSQTSLQFGDILNLVGRLDAIEAVTNVVGNVQQKLQQVQMLPVFIGIGLGVLLGSIPFYLPGFPAALKLGLAGGPLVVALILSRIGSIGKLYWFMPPSANLALREIGIVLFLAVVGFKSGAGFIDTLINGDGPAWMMYGVAITLIPLLVVGVLARLYGKMNYLTLCGLLAGSMTDPPALAFANGMHPTSGASALSYATVYPLVMFLRIISPQLLAILLWAGA</sequence>
<organism>
    <name type="scientific">Aeromonas hydrophila subsp. hydrophila (strain ATCC 7966 / DSM 30187 / BCRC 13018 / CCUG 14551 / JCM 1027 / KCTC 2358 / NCIMB 9240 / NCTC 8049)</name>
    <dbReference type="NCBI Taxonomy" id="380703"/>
    <lineage>
        <taxon>Bacteria</taxon>
        <taxon>Pseudomonadati</taxon>
        <taxon>Pseudomonadota</taxon>
        <taxon>Gammaproteobacteria</taxon>
        <taxon>Aeromonadales</taxon>
        <taxon>Aeromonadaceae</taxon>
        <taxon>Aeromonas</taxon>
    </lineage>
</organism>
<reference key="1">
    <citation type="journal article" date="2006" name="J. Bacteriol.">
        <title>Genome sequence of Aeromonas hydrophila ATCC 7966T: jack of all trades.</title>
        <authorList>
            <person name="Seshadri R."/>
            <person name="Joseph S.W."/>
            <person name="Chopra A.K."/>
            <person name="Sha J."/>
            <person name="Shaw J."/>
            <person name="Graf J."/>
            <person name="Haft D.H."/>
            <person name="Wu M."/>
            <person name="Ren Q."/>
            <person name="Rosovitz M.J."/>
            <person name="Madupu R."/>
            <person name="Tallon L."/>
            <person name="Kim M."/>
            <person name="Jin S."/>
            <person name="Vuong H."/>
            <person name="Stine O.C."/>
            <person name="Ali A."/>
            <person name="Horneman A.J."/>
            <person name="Heidelberg J.F."/>
        </authorList>
    </citation>
    <scope>NUCLEOTIDE SEQUENCE [LARGE SCALE GENOMIC DNA]</scope>
    <source>
        <strain>ATCC 7966 / DSM 30187 / BCRC 13018 / CCUG 14551 / JCM 1027 / KCTC 2358 / NCIMB 9240 / NCTC 8049</strain>
    </source>
</reference>
<evidence type="ECO:0000255" key="1">
    <source>
        <dbReference type="HAMAP-Rule" id="MF_01016"/>
    </source>
</evidence>
<proteinExistence type="inferred from homology"/>
<comment type="subcellular location">
    <subcellularLocation>
        <location evidence="1">Cell membrane</location>
        <topology evidence="1">Multi-pass membrane protein</topology>
    </subcellularLocation>
</comment>
<comment type="similarity">
    <text evidence="1">Belongs to the AAE transporter (TC 2.A.81) family. YidE subfamily.</text>
</comment>